<evidence type="ECO:0000255" key="1">
    <source>
        <dbReference type="HAMAP-Rule" id="MF_00151"/>
    </source>
</evidence>
<protein>
    <recommendedName>
        <fullName evidence="1">Phosphopantetheine adenylyltransferase</fullName>
        <ecNumber evidence="1">2.7.7.3</ecNumber>
    </recommendedName>
    <alternativeName>
        <fullName evidence="1">Dephospho-CoA pyrophosphorylase</fullName>
    </alternativeName>
    <alternativeName>
        <fullName evidence="1">Pantetheine-phosphate adenylyltransferase</fullName>
        <shortName evidence="1">PPAT</shortName>
    </alternativeName>
</protein>
<proteinExistence type="inferred from homology"/>
<keyword id="KW-0067">ATP-binding</keyword>
<keyword id="KW-0173">Coenzyme A biosynthesis</keyword>
<keyword id="KW-0963">Cytoplasm</keyword>
<keyword id="KW-0460">Magnesium</keyword>
<keyword id="KW-0547">Nucleotide-binding</keyword>
<keyword id="KW-0548">Nucleotidyltransferase</keyword>
<keyword id="KW-0808">Transferase</keyword>
<dbReference type="EC" id="2.7.7.3" evidence="1"/>
<dbReference type="EMBL" id="CP001099">
    <property type="protein sequence ID" value="ACF11652.1"/>
    <property type="molecule type" value="Genomic_DNA"/>
</dbReference>
<dbReference type="RefSeq" id="WP_012502485.1">
    <property type="nucleotide sequence ID" value="NC_011027.1"/>
</dbReference>
<dbReference type="SMR" id="B3QNZ9"/>
<dbReference type="STRING" id="517417.Cpar_1247"/>
<dbReference type="KEGG" id="cpc:Cpar_1247"/>
<dbReference type="eggNOG" id="COG0669">
    <property type="taxonomic scope" value="Bacteria"/>
</dbReference>
<dbReference type="HOGENOM" id="CLU_100149_0_1_10"/>
<dbReference type="OrthoDB" id="9806661at2"/>
<dbReference type="UniPathway" id="UPA00241">
    <property type="reaction ID" value="UER00355"/>
</dbReference>
<dbReference type="Proteomes" id="UP000008811">
    <property type="component" value="Chromosome"/>
</dbReference>
<dbReference type="GO" id="GO:0005737">
    <property type="term" value="C:cytoplasm"/>
    <property type="evidence" value="ECO:0007669"/>
    <property type="project" value="UniProtKB-SubCell"/>
</dbReference>
<dbReference type="GO" id="GO:0005524">
    <property type="term" value="F:ATP binding"/>
    <property type="evidence" value="ECO:0007669"/>
    <property type="project" value="UniProtKB-KW"/>
</dbReference>
<dbReference type="GO" id="GO:0004595">
    <property type="term" value="F:pantetheine-phosphate adenylyltransferase activity"/>
    <property type="evidence" value="ECO:0007669"/>
    <property type="project" value="UniProtKB-UniRule"/>
</dbReference>
<dbReference type="GO" id="GO:0015937">
    <property type="term" value="P:coenzyme A biosynthetic process"/>
    <property type="evidence" value="ECO:0007669"/>
    <property type="project" value="UniProtKB-UniRule"/>
</dbReference>
<dbReference type="CDD" id="cd02163">
    <property type="entry name" value="PPAT"/>
    <property type="match status" value="1"/>
</dbReference>
<dbReference type="Gene3D" id="3.40.50.620">
    <property type="entry name" value="HUPs"/>
    <property type="match status" value="1"/>
</dbReference>
<dbReference type="HAMAP" id="MF_00151">
    <property type="entry name" value="PPAT_bact"/>
    <property type="match status" value="1"/>
</dbReference>
<dbReference type="InterPro" id="IPR004821">
    <property type="entry name" value="Cyt_trans-like"/>
</dbReference>
<dbReference type="InterPro" id="IPR001980">
    <property type="entry name" value="PPAT"/>
</dbReference>
<dbReference type="InterPro" id="IPR014729">
    <property type="entry name" value="Rossmann-like_a/b/a_fold"/>
</dbReference>
<dbReference type="NCBIfam" id="TIGR01510">
    <property type="entry name" value="coaD_prev_kdtB"/>
    <property type="match status" value="1"/>
</dbReference>
<dbReference type="NCBIfam" id="TIGR00125">
    <property type="entry name" value="cyt_tran_rel"/>
    <property type="match status" value="1"/>
</dbReference>
<dbReference type="PANTHER" id="PTHR21342">
    <property type="entry name" value="PHOSPHOPANTETHEINE ADENYLYLTRANSFERASE"/>
    <property type="match status" value="1"/>
</dbReference>
<dbReference type="PANTHER" id="PTHR21342:SF1">
    <property type="entry name" value="PHOSPHOPANTETHEINE ADENYLYLTRANSFERASE"/>
    <property type="match status" value="1"/>
</dbReference>
<dbReference type="Pfam" id="PF01467">
    <property type="entry name" value="CTP_transf_like"/>
    <property type="match status" value="1"/>
</dbReference>
<dbReference type="PRINTS" id="PR01020">
    <property type="entry name" value="LPSBIOSNTHSS"/>
</dbReference>
<dbReference type="SUPFAM" id="SSF52374">
    <property type="entry name" value="Nucleotidylyl transferase"/>
    <property type="match status" value="1"/>
</dbReference>
<name>COAD_CHLP8</name>
<gene>
    <name evidence="1" type="primary">coaD</name>
    <name type="ordered locus">Cpar_1247</name>
</gene>
<reference key="1">
    <citation type="submission" date="2008-06" db="EMBL/GenBank/DDBJ databases">
        <title>Complete sequence of Chlorobaculum parvum NCIB 8327.</title>
        <authorList>
            <consortium name="US DOE Joint Genome Institute"/>
            <person name="Lucas S."/>
            <person name="Copeland A."/>
            <person name="Lapidus A."/>
            <person name="Glavina del Rio T."/>
            <person name="Dalin E."/>
            <person name="Tice H."/>
            <person name="Bruce D."/>
            <person name="Goodwin L."/>
            <person name="Pitluck S."/>
            <person name="Schmutz J."/>
            <person name="Larimer F."/>
            <person name="Land M."/>
            <person name="Hauser L."/>
            <person name="Kyrpides N."/>
            <person name="Mikhailova N."/>
            <person name="Zhao F."/>
            <person name="Li T."/>
            <person name="Liu Z."/>
            <person name="Overmann J."/>
            <person name="Bryant D.A."/>
            <person name="Richardson P."/>
        </authorList>
    </citation>
    <scope>NUCLEOTIDE SEQUENCE [LARGE SCALE GENOMIC DNA]</scope>
    <source>
        <strain>DSM 263 / NCIMB 8327</strain>
    </source>
</reference>
<organism>
    <name type="scientific">Chlorobaculum parvum (strain DSM 263 / NCIMB 8327)</name>
    <name type="common">Chlorobium vibrioforme subsp. thiosulfatophilum</name>
    <dbReference type="NCBI Taxonomy" id="517417"/>
    <lineage>
        <taxon>Bacteria</taxon>
        <taxon>Pseudomonadati</taxon>
        <taxon>Chlorobiota</taxon>
        <taxon>Chlorobiia</taxon>
        <taxon>Chlorobiales</taxon>
        <taxon>Chlorobiaceae</taxon>
        <taxon>Chlorobaculum</taxon>
    </lineage>
</organism>
<comment type="function">
    <text evidence="1">Reversibly transfers an adenylyl group from ATP to 4'-phosphopantetheine, yielding dephospho-CoA (dPCoA) and pyrophosphate.</text>
</comment>
<comment type="catalytic activity">
    <reaction evidence="1">
        <text>(R)-4'-phosphopantetheine + ATP + H(+) = 3'-dephospho-CoA + diphosphate</text>
        <dbReference type="Rhea" id="RHEA:19801"/>
        <dbReference type="ChEBI" id="CHEBI:15378"/>
        <dbReference type="ChEBI" id="CHEBI:30616"/>
        <dbReference type="ChEBI" id="CHEBI:33019"/>
        <dbReference type="ChEBI" id="CHEBI:57328"/>
        <dbReference type="ChEBI" id="CHEBI:61723"/>
        <dbReference type="EC" id="2.7.7.3"/>
    </reaction>
</comment>
<comment type="cofactor">
    <cofactor evidence="1">
        <name>Mg(2+)</name>
        <dbReference type="ChEBI" id="CHEBI:18420"/>
    </cofactor>
</comment>
<comment type="pathway">
    <text evidence="1">Cofactor biosynthesis; coenzyme A biosynthesis; CoA from (R)-pantothenate: step 4/5.</text>
</comment>
<comment type="subunit">
    <text evidence="1">Homohexamer.</text>
</comment>
<comment type="subcellular location">
    <subcellularLocation>
        <location evidence="1">Cytoplasm</location>
    </subcellularLocation>
</comment>
<comment type="similarity">
    <text evidence="1">Belongs to the bacterial CoaD family.</text>
</comment>
<feature type="chain" id="PRO_1000096777" description="Phosphopantetheine adenylyltransferase">
    <location>
        <begin position="1"/>
        <end position="166"/>
    </location>
</feature>
<feature type="binding site" evidence="1">
    <location>
        <begin position="10"/>
        <end position="11"/>
    </location>
    <ligand>
        <name>ATP</name>
        <dbReference type="ChEBI" id="CHEBI:30616"/>
    </ligand>
</feature>
<feature type="binding site" evidence="1">
    <location>
        <position position="10"/>
    </location>
    <ligand>
        <name>substrate</name>
    </ligand>
</feature>
<feature type="binding site" evidence="1">
    <location>
        <position position="18"/>
    </location>
    <ligand>
        <name>ATP</name>
        <dbReference type="ChEBI" id="CHEBI:30616"/>
    </ligand>
</feature>
<feature type="binding site" evidence="1">
    <location>
        <position position="42"/>
    </location>
    <ligand>
        <name>substrate</name>
    </ligand>
</feature>
<feature type="binding site" evidence="1">
    <location>
        <position position="75"/>
    </location>
    <ligand>
        <name>substrate</name>
    </ligand>
</feature>
<feature type="binding site" evidence="1">
    <location>
        <position position="89"/>
    </location>
    <ligand>
        <name>substrate</name>
    </ligand>
</feature>
<feature type="binding site" evidence="1">
    <location>
        <begin position="90"/>
        <end position="92"/>
    </location>
    <ligand>
        <name>ATP</name>
        <dbReference type="ChEBI" id="CHEBI:30616"/>
    </ligand>
</feature>
<feature type="binding site" evidence="1">
    <location>
        <position position="100"/>
    </location>
    <ligand>
        <name>ATP</name>
        <dbReference type="ChEBI" id="CHEBI:30616"/>
    </ligand>
</feature>
<feature type="binding site" evidence="1">
    <location>
        <begin position="125"/>
        <end position="131"/>
    </location>
    <ligand>
        <name>ATP</name>
        <dbReference type="ChEBI" id="CHEBI:30616"/>
    </ligand>
</feature>
<feature type="site" description="Transition state stabilizer" evidence="1">
    <location>
        <position position="18"/>
    </location>
</feature>
<accession>B3QNZ9</accession>
<sequence length="166" mass="18877">MTRKAIYPGTFDPFTNGHLDVLERALNIFDHVEVVLAENSQKQTLFSVDERLEMVHEVVREFSNVSVDVLHAGLLADYARQAGASAIVRGVRQVKDFEYEFQMSLLNRHLYPEVTTVFLMPNVKYTYVASTIIREVSMLGGDVSKFVHPFVLDKLNAKRAEREGQS</sequence>